<comment type="function">
    <text evidence="2 3 7">Voltage-gated potassium channel that mediates transmembrane potassium transport in excitable membranes, primarily in the brain and the central nervous system, but also in the cardiovascular system. Prevents aberrant action potential firing and regulates neuronal output. Forms tetrameric potassium-selective channels through which potassium ions pass in accordance with their electrochemical gradient. The channel alternates between opened and closed conformations in response to the voltage difference across the membrane (PubMed:8415758). Can form functional homotetrameric channels and heterotetrameric channels that contain variable proportions of KCNA1, KCNA2, KCNA4, KCNA5, KCNA6, KCNA7, and possibly other family members as well; channel properties depend on the type of alpha subunits that are part of the channel (By similarity). Channel properties are modulated by cytoplasmic beta subunits that regulate the subcellular location of the alpha subunits and promote rapid inactivation of delayed rectifier potassium channels (By similarity). In vivo, membranes probably contain a mixture of heteromeric potassium channel complexes, making it difficult to assign currents observed in intact tissues to any particular potassium channel family member. Homotetrameric KCNA2 forms a delayed-rectifier potassium channel that opens in response to membrane depolarization, followed by slow spontaneous channel closure (PubMed:8415758). In contrast, a heteromultimer formed by KCNA2 and KCNA4 shows rapid inactivation (By similarity). Regulates neuronal excitability and plays a role as pacemaker in the regulation of neuronal action potentials (By similarity). KCNA2-containing channels play a presynaptic role and prevent hyperexcitability and aberrant action potential firing (By similarity). Response to toxins that are selective for KCNA2-containing potassium channels suggests that in Purkinje cells, dendritic subthreshold KCNA2-containing potassium channels prevent random spontaneous calcium spikes, suppressing dendritic hyperexcitability without hindering the generation of somatic action potentials, and thereby play an important role in motor coordination (By similarity). Plays a role in the induction of long-term potentiation of neuron excitability in the CA3 layer of the hippocampus (By similarity). May function as down-stream effector for G protein-coupled receptors and inhibit GABAergic inputs to basolateral amygdala neurons (By similarity). May contribute to the regulation of neurotransmitter release, such as gamma-aminobutyric acid (GABA) (By similarity). Contributes to the regulation of the axonal release of the neurotransmitter dopamine (By similarity). Reduced KCNA2 expression plays a role in the perception of neuropathic pain after peripheral nerve injury, but not acute pain (By similarity). Plays a role in the regulation of the time spent in non-rapid eye movement (NREM) sleep (By similarity).</text>
</comment>
<comment type="catalytic activity">
    <reaction evidence="7">
        <text>K(+)(in) = K(+)(out)</text>
        <dbReference type="Rhea" id="RHEA:29463"/>
        <dbReference type="ChEBI" id="CHEBI:29103"/>
    </reaction>
</comment>
<comment type="activity regulation">
    <text evidence="1 3 7">Inhibited by 4-aminopyridine (4-AP) (PubMed:8415758). Inhibited by dendrotoxin (DTX) and charybdotoxin (CTX), but not by tetraethylammonium (TEA) (By similarity). Inhibited by tityustoxin-K alpha (TsTX-Kalpha), a toxin that is highly specific for KCNA2 (By similarity). Inhibited by maurotoxin (By similarity). Inhibited by kappaM conotoxins kappaM-RIIIJ and kappaM-RIIIK (By similarity).</text>
</comment>
<comment type="subunit">
    <text evidence="1 2 3 4">Homotetramer and heterotetramer with other channel-forming alpha subunits, such as KCNA1, KCNA4, KCNA5, KCNA6 and KCNA7 (By similarity). Channel activity is regulated by interaction with the beta subunits, including KCNAB1 and KCNAB2 (By similarity). Identified in a complex with KCNA1 and KCNAB2 (By similarity). Identified in a complex with KCNA5 and KCNAB1 (By similarity). Interacts with the beta subunit KCNAB1 (By similarity). Identified in a complex with KCNA4 and FYN (By similarity). Interacts with PTK2B (By similarity). Interacts (via C-terminus) with CTTN (By similarity). Interacts (via N-terminal cytoplasmic domain) with RHOA (GTP-bound form); this regulates channel activity by reducing location at the cell surface in response to CHRM1 activation (By similarity). Interacts with DRD2 (By similarity). Interacts with SIGMAR1; cocaine consumption leads to increased interaction (By similarity). Interacts with ADAM22 (By similarity). Interacts with CNTNAP2 (By similarity). Interacts (via C-terminus) with the PDZ domains of DLG1, DLG2 and DLG4 (By similarity). Interacts with ADAM11 (By similarity). Interacts with LYNX1 (By similarity).</text>
</comment>
<comment type="subcellular location">
    <subcellularLocation>
        <location evidence="7">Cell membrane</location>
        <topology evidence="3 8">Multi-pass membrane protein</topology>
    </subcellularLocation>
    <subcellularLocation>
        <location evidence="3">Membrane</location>
    </subcellularLocation>
    <subcellularLocation>
        <location evidence="3">Cell projection</location>
        <location evidence="3">Axon</location>
    </subcellularLocation>
    <subcellularLocation>
        <location evidence="3">Synapse</location>
    </subcellularLocation>
    <subcellularLocation>
        <location evidence="2">Presynaptic cell membrane</location>
    </subcellularLocation>
    <subcellularLocation>
        <location evidence="2">Synapse</location>
        <location evidence="2">Synaptosome</location>
    </subcellularLocation>
    <subcellularLocation>
        <location evidence="3">Endoplasmic reticulum membrane</location>
    </subcellularLocation>
    <subcellularLocation>
        <location evidence="2">Cell projection</location>
        <location evidence="2">Dendrite</location>
    </subcellularLocation>
    <subcellularLocation>
        <location evidence="3">Cell projection</location>
        <location evidence="3">Lamellipodium membrane</location>
    </subcellularLocation>
    <subcellularLocation>
        <location evidence="2">Cell junction</location>
        <location evidence="2">Paranodal septate junction</location>
    </subcellularLocation>
    <text evidence="2 3">KCNA2 by itself is detected both at the endoplasmic reticulum and at the cell membrane. Coexpression with KCNA4 or with beta subunits promotes expression at the cell membrane. Coexpression with KCNA1 inhibits cell surface expression. In myelinated peripheral axons, clustered in the juxtaparadonal region and at an internodal line located along the mesaxon and below the Schmidt-Lanterman incisures (By similarity).</text>
</comment>
<comment type="tissue specificity">
    <text evidence="7">Expressed in a wide variety of gastrointestinal smooth muscles. Not expressed in portal vein, renal artery, and uterus.</text>
</comment>
<comment type="domain">
    <text evidence="3">The cytoplasmic N-terminus is important for tetramerization. Interactions between the different subunits modulate the gating characteristics (By similarity). Besides, the cytoplasmic N-terminal domain mediates interaction with RHOA and thus is required for RHOA-mediated endocytosis (By similarity).</text>
</comment>
<comment type="domain">
    <text evidence="3">The transmembrane segment S4 functions as a voltage-sensor and is characterized by a series of positively charged amino acids at every third position. Channel opening and closing is effected by a conformation change that affects the position and orientation of the voltage-sensor paddle formed by S3 and S4 within the membrane. A transmembrane electric field that is positive inside would push the positively charged S4 segment outwards, thereby opening the pore, while a field that is negative inside would pull the S4 segment inwards and close the pore. Changes in the position and orientation of S4 are then transmitted to the activation gate formed by the inner helix bundle via the S4-S5 linker region.</text>
</comment>
<comment type="PTM">
    <text evidence="3">Phosphorylated on tyrosine residues; phosphorylation increases in response to ischemia (By similarity). Phosphorylated on tyrosine residues by activated PTK2B/PYK2 (By similarity). Phosphorylation on tyrosine residues suppresses ion channel activity (By similarity). Phosphorylated on tyrosine residues in response to CHRM1 activation; this abolishes interaction with CTTN. This is probably due to endocytosis of the phosphorylated channel subunits (By similarity). Phosphorylated on serine residues in response to increased cAMP levels; phosphorylation is apparently not catalyzed by PKA (By similarity).</text>
</comment>
<comment type="PTM">
    <text evidence="3">N-glycosylated, with complex, sialylated N-glycans.</text>
</comment>
<comment type="miscellaneous">
    <text evidence="9">The delay or D-type current observed in hippocampus pyramidal neurons is probably mediated by potassium channels containing KCNA2 plus KCNA1 or other family members. It is activated at about -50 mV, i.e. below the action potential threshold, and is characterized by slow inactivation, extremely slow recovery from inactivation, sensitivity to dendrotoxin (DTX) and to 4-aminopyridine (4-AP).</text>
</comment>
<comment type="similarity">
    <text evidence="8">Belongs to the potassium channel family. A (Shaker) (TC 1.A.1.2) subfamily. Kv1.2/KCNA2 sub-subfamily.</text>
</comment>
<sequence>MTVATGEPADEAAALPGHPQDTYDPEADHECCERVVTNISGLRFETQLKTLAQFPETLLGDPKKRMRFFDPLRNEIFFVRNRPSFDAILYYYQSGGRLRRPVNVPLDIFSEEIRFYELGEEAMEMFREDEGYIKEEERPLPENEFQRQVWLLFEYPESSGPARIIAIVSVMVILISIVSFCLETLPIFRDENEDMHGGGVTFHTYSNSTIGYQQSTSFTDPFFIVETLCIIWFSFEFLVRFFACPSKAGFFTNIMNIIDIVAIIPYFITLGTELAEKPEDAQQGQQAMSLAILRVIRLVRVFRIFKLSRHSKGLQILGQTLKASMRELGLLIFFLFIGVILFSSAVYFAEADERESQFPSIPDAFWWAVVSMTTVGYGDMVPTTIGGKIVGSLCAIAGVLTIALPVPVIVSNFNYFYHRETEGEEQAQYLQVTSCPKIPSSPDLKKSRSASTISKSDYMEIQEGVNNSNEDFREENLKTANCTLANTNYVNITKMLTDV</sequence>
<reference key="1">
    <citation type="journal article" date="1993" name="Proc. Natl. Acad. Sci. U.S.A.">
        <title>Cloning and expression of a Kv1.2 class delayed rectifier K+ channel from canine colonic smooth muscle.</title>
        <authorList>
            <person name="Hart P.J."/>
            <person name="Overturf K.E."/>
            <person name="Russell S.N."/>
            <person name="Carl A."/>
            <person name="Hume J.R."/>
            <person name="Sanders K.M."/>
            <person name="Horowitz B."/>
        </authorList>
    </citation>
    <scope>NUCLEOTIDE SEQUENCE [MRNA]</scope>
    <scope>FUNCTION</scope>
    <scope>SUBCELLULAR LOCATION</scope>
    <scope>TISSUE SPECIFICITY</scope>
    <scope>TRANSPORTER ACTIVITY</scope>
    <source>
        <tissue>Colon smooth muscle</tissue>
    </source>
</reference>
<reference key="2">
    <citation type="journal article" date="2007" name="Mol. Neurobiol.">
        <title>Ionic channel function in action potential generation: current perspective.</title>
        <authorList>
            <person name="Baranauskas G."/>
        </authorList>
    </citation>
    <scope>REVIEW</scope>
</reference>
<dbReference type="EMBL" id="L19740">
    <property type="protein sequence ID" value="AAA03607.1"/>
    <property type="molecule type" value="mRNA"/>
</dbReference>
<dbReference type="PIR" id="A48672">
    <property type="entry name" value="A48672"/>
</dbReference>
<dbReference type="RefSeq" id="NP_001003329.1">
    <property type="nucleotide sequence ID" value="NM_001003329.1"/>
</dbReference>
<dbReference type="SMR" id="Q28293"/>
<dbReference type="FunCoup" id="Q28293">
    <property type="interactions" value="32"/>
</dbReference>
<dbReference type="STRING" id="9615.ENSCAFP00000029266"/>
<dbReference type="GlyCosmos" id="Q28293">
    <property type="glycosylation" value="1 site, No reported glycans"/>
</dbReference>
<dbReference type="PaxDb" id="9612-ENSCAFP00000029266"/>
<dbReference type="GeneID" id="404022"/>
<dbReference type="KEGG" id="cfa:404022"/>
<dbReference type="CTD" id="3737"/>
<dbReference type="eggNOG" id="KOG1545">
    <property type="taxonomic scope" value="Eukaryota"/>
</dbReference>
<dbReference type="InParanoid" id="Q28293"/>
<dbReference type="OrthoDB" id="415460at2759"/>
<dbReference type="Proteomes" id="UP000002254">
    <property type="component" value="Unplaced"/>
</dbReference>
<dbReference type="Proteomes" id="UP000694429">
    <property type="component" value="Unplaced"/>
</dbReference>
<dbReference type="Proteomes" id="UP000694542">
    <property type="component" value="Unplaced"/>
</dbReference>
<dbReference type="Proteomes" id="UP000805418">
    <property type="component" value="Unplaced"/>
</dbReference>
<dbReference type="GO" id="GO:0030424">
    <property type="term" value="C:axon"/>
    <property type="evidence" value="ECO:0000250"/>
    <property type="project" value="UniProtKB"/>
</dbReference>
<dbReference type="GO" id="GO:0043679">
    <property type="term" value="C:axon terminus"/>
    <property type="evidence" value="ECO:0000250"/>
    <property type="project" value="UniProtKB"/>
</dbReference>
<dbReference type="GO" id="GO:0030425">
    <property type="term" value="C:dendrite"/>
    <property type="evidence" value="ECO:0000250"/>
    <property type="project" value="UniProtKB"/>
</dbReference>
<dbReference type="GO" id="GO:0005789">
    <property type="term" value="C:endoplasmic reticulum membrane"/>
    <property type="evidence" value="ECO:0007669"/>
    <property type="project" value="UniProtKB-SubCell"/>
</dbReference>
<dbReference type="GO" id="GO:0044224">
    <property type="term" value="C:juxtaparanode region of axon"/>
    <property type="evidence" value="ECO:0000250"/>
    <property type="project" value="UniProtKB"/>
</dbReference>
<dbReference type="GO" id="GO:0030027">
    <property type="term" value="C:lamellipodium"/>
    <property type="evidence" value="ECO:0000250"/>
    <property type="project" value="UniProtKB"/>
</dbReference>
<dbReference type="GO" id="GO:0031258">
    <property type="term" value="C:lamellipodium membrane"/>
    <property type="evidence" value="ECO:0007669"/>
    <property type="project" value="UniProtKB-SubCell"/>
</dbReference>
<dbReference type="GO" id="GO:0016020">
    <property type="term" value="C:membrane"/>
    <property type="evidence" value="ECO:0000318"/>
    <property type="project" value="GO_Central"/>
</dbReference>
<dbReference type="GO" id="GO:0032809">
    <property type="term" value="C:neuronal cell body membrane"/>
    <property type="evidence" value="ECO:0000250"/>
    <property type="project" value="UniProtKB"/>
</dbReference>
<dbReference type="GO" id="GO:0033010">
    <property type="term" value="C:paranodal junction"/>
    <property type="evidence" value="ECO:0007669"/>
    <property type="project" value="UniProtKB-SubCell"/>
</dbReference>
<dbReference type="GO" id="GO:0043204">
    <property type="term" value="C:perikaryon"/>
    <property type="evidence" value="ECO:0000250"/>
    <property type="project" value="UniProtKB"/>
</dbReference>
<dbReference type="GO" id="GO:0005886">
    <property type="term" value="C:plasma membrane"/>
    <property type="evidence" value="ECO:0000250"/>
    <property type="project" value="UniProtKB"/>
</dbReference>
<dbReference type="GO" id="GO:0042734">
    <property type="term" value="C:presynaptic membrane"/>
    <property type="evidence" value="ECO:0007669"/>
    <property type="project" value="UniProtKB-SubCell"/>
</dbReference>
<dbReference type="GO" id="GO:0008076">
    <property type="term" value="C:voltage-gated potassium channel complex"/>
    <property type="evidence" value="ECO:0000250"/>
    <property type="project" value="UniProtKB"/>
</dbReference>
<dbReference type="GO" id="GO:0005251">
    <property type="term" value="F:delayed rectifier potassium channel activity"/>
    <property type="evidence" value="ECO:0000250"/>
    <property type="project" value="UniProtKB"/>
</dbReference>
<dbReference type="GO" id="GO:0005249">
    <property type="term" value="F:voltage-gated potassium channel activity"/>
    <property type="evidence" value="ECO:0000314"/>
    <property type="project" value="UniProtKB"/>
</dbReference>
<dbReference type="GO" id="GO:0001508">
    <property type="term" value="P:action potential"/>
    <property type="evidence" value="ECO:0000318"/>
    <property type="project" value="GO_Central"/>
</dbReference>
<dbReference type="GO" id="GO:0019228">
    <property type="term" value="P:neuronal action potential"/>
    <property type="evidence" value="ECO:0000250"/>
    <property type="project" value="UniProtKB"/>
</dbReference>
<dbReference type="GO" id="GO:0071805">
    <property type="term" value="P:potassium ion transmembrane transport"/>
    <property type="evidence" value="ECO:0000250"/>
    <property type="project" value="UniProtKB"/>
</dbReference>
<dbReference type="GO" id="GO:0051260">
    <property type="term" value="P:protein homooligomerization"/>
    <property type="evidence" value="ECO:0007669"/>
    <property type="project" value="InterPro"/>
</dbReference>
<dbReference type="GO" id="GO:0014059">
    <property type="term" value="P:regulation of dopamine secretion"/>
    <property type="evidence" value="ECO:0000250"/>
    <property type="project" value="UniProtKB"/>
</dbReference>
<dbReference type="GO" id="GO:0019233">
    <property type="term" value="P:sensory perception of pain"/>
    <property type="evidence" value="ECO:0000250"/>
    <property type="project" value="UniProtKB"/>
</dbReference>
<dbReference type="FunFam" id="1.10.287.70:FF:000002">
    <property type="entry name" value="Potassium voltage-gated channel subfamily a member"/>
    <property type="match status" value="1"/>
</dbReference>
<dbReference type="FunFam" id="1.20.120.350:FF:000025">
    <property type="entry name" value="Potassium voltage-gated channel subfamily A member 2"/>
    <property type="match status" value="1"/>
</dbReference>
<dbReference type="FunFam" id="3.30.710.10:FF:000007">
    <property type="entry name" value="Potassium voltage-gated channel subfamily A member 2"/>
    <property type="match status" value="1"/>
</dbReference>
<dbReference type="Gene3D" id="1.10.287.70">
    <property type="match status" value="1"/>
</dbReference>
<dbReference type="Gene3D" id="3.30.710.10">
    <property type="entry name" value="Potassium Channel Kv1.1, Chain A"/>
    <property type="match status" value="1"/>
</dbReference>
<dbReference type="Gene3D" id="1.20.120.350">
    <property type="entry name" value="Voltage-gated potassium channels. Chain C"/>
    <property type="match status" value="1"/>
</dbReference>
<dbReference type="InterPro" id="IPR000210">
    <property type="entry name" value="BTB/POZ_dom"/>
</dbReference>
<dbReference type="InterPro" id="IPR005821">
    <property type="entry name" value="Ion_trans_dom"/>
</dbReference>
<dbReference type="InterPro" id="IPR003968">
    <property type="entry name" value="K_chnl_volt-dep_Kv"/>
</dbReference>
<dbReference type="InterPro" id="IPR003972">
    <property type="entry name" value="K_chnl_volt-dep_Kv1"/>
</dbReference>
<dbReference type="InterPro" id="IPR004049">
    <property type="entry name" value="K_chnl_volt-dep_Kv1.2"/>
</dbReference>
<dbReference type="InterPro" id="IPR011333">
    <property type="entry name" value="SKP1/BTB/POZ_sf"/>
</dbReference>
<dbReference type="InterPro" id="IPR003131">
    <property type="entry name" value="T1-type_BTB"/>
</dbReference>
<dbReference type="InterPro" id="IPR028325">
    <property type="entry name" value="VG_K_chnl"/>
</dbReference>
<dbReference type="InterPro" id="IPR027359">
    <property type="entry name" value="Volt_channel_dom_sf"/>
</dbReference>
<dbReference type="PANTHER" id="PTHR11537:SF23">
    <property type="entry name" value="POTASSIUM VOLTAGE-GATED CHANNEL SUBFAMILY A MEMBER 2"/>
    <property type="match status" value="1"/>
</dbReference>
<dbReference type="PANTHER" id="PTHR11537">
    <property type="entry name" value="VOLTAGE-GATED POTASSIUM CHANNEL"/>
    <property type="match status" value="1"/>
</dbReference>
<dbReference type="Pfam" id="PF02214">
    <property type="entry name" value="BTB_2"/>
    <property type="match status" value="1"/>
</dbReference>
<dbReference type="Pfam" id="PF00520">
    <property type="entry name" value="Ion_trans"/>
    <property type="match status" value="1"/>
</dbReference>
<dbReference type="PRINTS" id="PR00169">
    <property type="entry name" value="KCHANNEL"/>
</dbReference>
<dbReference type="PRINTS" id="PR01509">
    <property type="entry name" value="KV12CHANNEL"/>
</dbReference>
<dbReference type="PRINTS" id="PR01491">
    <property type="entry name" value="KVCHANNEL"/>
</dbReference>
<dbReference type="PRINTS" id="PR01496">
    <property type="entry name" value="SHAKERCHANEL"/>
</dbReference>
<dbReference type="SMART" id="SM00225">
    <property type="entry name" value="BTB"/>
    <property type="match status" value="1"/>
</dbReference>
<dbReference type="SUPFAM" id="SSF54695">
    <property type="entry name" value="POZ domain"/>
    <property type="match status" value="1"/>
</dbReference>
<dbReference type="SUPFAM" id="SSF81324">
    <property type="entry name" value="Voltage-gated potassium channels"/>
    <property type="match status" value="1"/>
</dbReference>
<proteinExistence type="evidence at transcript level"/>
<accession>Q28293</accession>
<name>KCNA2_CANLF</name>
<gene>
    <name type="primary">KCNA2</name>
</gene>
<feature type="chain" id="PRO_0000053971" description="Potassium voltage-gated channel subfamily A member 2">
    <location>
        <begin position="1"/>
        <end position="499"/>
    </location>
</feature>
<feature type="topological domain" description="Cytoplasmic" evidence="3">
    <location>
        <begin position="1"/>
        <end position="160"/>
    </location>
</feature>
<feature type="transmembrane region" description="Helical; Name=Segment S1" evidence="3">
    <location>
        <begin position="161"/>
        <end position="182"/>
    </location>
</feature>
<feature type="topological domain" description="Extracellular" evidence="3">
    <location>
        <begin position="183"/>
        <end position="221"/>
    </location>
</feature>
<feature type="transmembrane region" description="Helical; Name=Segment S2" evidence="3">
    <location>
        <begin position="222"/>
        <end position="243"/>
    </location>
</feature>
<feature type="topological domain" description="Cytoplasmic" evidence="3">
    <location>
        <begin position="244"/>
        <end position="254"/>
    </location>
</feature>
<feature type="transmembrane region" description="Helical; Name=Segment S3" evidence="3">
    <location>
        <begin position="255"/>
        <end position="275"/>
    </location>
</feature>
<feature type="topological domain" description="Extracellular" evidence="3">
    <location>
        <begin position="276"/>
        <end position="289"/>
    </location>
</feature>
<feature type="transmembrane region" description="Helical; Voltage-sensor; Name=Segment S4" evidence="3">
    <location>
        <begin position="290"/>
        <end position="310"/>
    </location>
</feature>
<feature type="topological domain" description="Cytoplasmic" evidence="3">
    <location>
        <begin position="311"/>
        <end position="325"/>
    </location>
</feature>
<feature type="transmembrane region" description="Helical; Name=Segment S5" evidence="3">
    <location>
        <begin position="326"/>
        <end position="347"/>
    </location>
</feature>
<feature type="topological domain" description="Extracellular" evidence="3">
    <location>
        <begin position="348"/>
        <end position="361"/>
    </location>
</feature>
<feature type="intramembrane region" description="Helical; Name=Pore helix" evidence="3">
    <location>
        <begin position="362"/>
        <end position="373"/>
    </location>
</feature>
<feature type="intramembrane region" evidence="3">
    <location>
        <begin position="374"/>
        <end position="381"/>
    </location>
</feature>
<feature type="topological domain" description="Extracellular" evidence="3">
    <location>
        <begin position="382"/>
        <end position="388"/>
    </location>
</feature>
<feature type="transmembrane region" description="Helical; Name=Segment S6" evidence="3">
    <location>
        <begin position="389"/>
        <end position="417"/>
    </location>
</feature>
<feature type="topological domain" description="Cytoplasmic" evidence="3">
    <location>
        <begin position="418"/>
        <end position="499"/>
    </location>
</feature>
<feature type="region of interest" description="Tetramerization domain" evidence="3">
    <location>
        <begin position="1"/>
        <end position="125"/>
    </location>
</feature>
<feature type="region of interest" description="Disordered" evidence="6">
    <location>
        <begin position="1"/>
        <end position="27"/>
    </location>
</feature>
<feature type="region of interest" description="S4-S5 linker" evidence="3">
    <location>
        <begin position="312"/>
        <end position="325"/>
    </location>
</feature>
<feature type="short sequence motif" description="Selectivity filter" evidence="3">
    <location>
        <begin position="374"/>
        <end position="379"/>
    </location>
</feature>
<feature type="short sequence motif" description="PDZ-binding" evidence="3">
    <location>
        <begin position="497"/>
        <end position="499"/>
    </location>
</feature>
<feature type="site" description="Important for normal, slow channel gating" evidence="3">
    <location>
        <position position="252"/>
    </location>
</feature>
<feature type="site" description="Important for binding with the scorpion mesomartoxin; when the scorpion mesomartoxin-rKv1.2/KCNA2 interaction is modeled, this residue is close to the 'Y-57' residue of the toxin" evidence="3">
    <location>
        <position position="381"/>
    </location>
</feature>
<feature type="modified residue" description="Phosphotyrosine" evidence="2">
    <location>
        <position position="429"/>
    </location>
</feature>
<feature type="modified residue" description="Phosphoserine" evidence="2">
    <location>
        <position position="434"/>
    </location>
</feature>
<feature type="modified residue" description="Phosphoserine" evidence="2">
    <location>
        <position position="440"/>
    </location>
</feature>
<feature type="modified residue" description="Phosphoserine" evidence="4">
    <location>
        <position position="441"/>
    </location>
</feature>
<feature type="modified residue" description="Phosphoserine" evidence="4">
    <location>
        <position position="449"/>
    </location>
</feature>
<feature type="modified residue" description="Phosphotyrosine" evidence="3">
    <location>
        <position position="458"/>
    </location>
</feature>
<feature type="modified residue" description="Phosphoserine" evidence="2">
    <location>
        <position position="468"/>
    </location>
</feature>
<feature type="lipid moiety-binding region" description="S-palmitoyl cysteine" evidence="5">
    <location>
        <position position="244"/>
    </location>
</feature>
<feature type="glycosylation site" description="N-linked (GlcNAc...) asparagine" evidence="5">
    <location>
        <position position="207"/>
    </location>
</feature>
<protein>
    <recommendedName>
        <fullName>Potassium voltage-gated channel subfamily A member 2</fullName>
    </recommendedName>
    <alternativeName>
        <fullName>CSMK1</fullName>
    </alternativeName>
    <alternativeName>
        <fullName>Voltage-gated potassium channel subunit Kv1.2</fullName>
    </alternativeName>
</protein>
<evidence type="ECO:0000250" key="1">
    <source>
        <dbReference type="UniProtKB" id="P16389"/>
    </source>
</evidence>
<evidence type="ECO:0000250" key="2">
    <source>
        <dbReference type="UniProtKB" id="P63141"/>
    </source>
</evidence>
<evidence type="ECO:0000250" key="3">
    <source>
        <dbReference type="UniProtKB" id="P63142"/>
    </source>
</evidence>
<evidence type="ECO:0000250" key="4">
    <source>
        <dbReference type="UniProtKB" id="Q09081"/>
    </source>
</evidence>
<evidence type="ECO:0000255" key="5"/>
<evidence type="ECO:0000256" key="6">
    <source>
        <dbReference type="SAM" id="MobiDB-lite"/>
    </source>
</evidence>
<evidence type="ECO:0000269" key="7">
    <source>
    </source>
</evidence>
<evidence type="ECO:0000305" key="8"/>
<evidence type="ECO:0000305" key="9">
    <source>
    </source>
</evidence>
<keyword id="KW-0965">Cell junction</keyword>
<keyword id="KW-1003">Cell membrane</keyword>
<keyword id="KW-0966">Cell projection</keyword>
<keyword id="KW-0256">Endoplasmic reticulum</keyword>
<keyword id="KW-0325">Glycoprotein</keyword>
<keyword id="KW-0407">Ion channel</keyword>
<keyword id="KW-0406">Ion transport</keyword>
<keyword id="KW-0449">Lipoprotein</keyword>
<keyword id="KW-0472">Membrane</keyword>
<keyword id="KW-0564">Palmitate</keyword>
<keyword id="KW-0597">Phosphoprotein</keyword>
<keyword id="KW-0630">Potassium</keyword>
<keyword id="KW-0631">Potassium channel</keyword>
<keyword id="KW-0633">Potassium transport</keyword>
<keyword id="KW-1185">Reference proteome</keyword>
<keyword id="KW-0770">Synapse</keyword>
<keyword id="KW-0771">Synaptosome</keyword>
<keyword id="KW-0812">Transmembrane</keyword>
<keyword id="KW-1133">Transmembrane helix</keyword>
<keyword id="KW-0813">Transport</keyword>
<keyword id="KW-0851">Voltage-gated channel</keyword>
<organism>
    <name type="scientific">Canis lupus familiaris</name>
    <name type="common">Dog</name>
    <name type="synonym">Canis familiaris</name>
    <dbReference type="NCBI Taxonomy" id="9615"/>
    <lineage>
        <taxon>Eukaryota</taxon>
        <taxon>Metazoa</taxon>
        <taxon>Chordata</taxon>
        <taxon>Craniata</taxon>
        <taxon>Vertebrata</taxon>
        <taxon>Euteleostomi</taxon>
        <taxon>Mammalia</taxon>
        <taxon>Eutheria</taxon>
        <taxon>Laurasiatheria</taxon>
        <taxon>Carnivora</taxon>
        <taxon>Caniformia</taxon>
        <taxon>Canidae</taxon>
        <taxon>Canis</taxon>
    </lineage>
</organism>